<protein>
    <recommendedName>
        <fullName evidence="1">Large ribosomal subunit protein eL8</fullName>
    </recommendedName>
    <alternativeName>
        <fullName evidence="2">50S ribosomal protein L7Ae</fullName>
    </alternativeName>
    <alternativeName>
        <fullName evidence="1">Ribosomal protein L8e</fullName>
    </alternativeName>
</protein>
<dbReference type="EMBL" id="AE017261">
    <property type="protein sequence ID" value="AAT43865.1"/>
    <property type="molecule type" value="Genomic_DNA"/>
</dbReference>
<dbReference type="SMR" id="Q6KZI7"/>
<dbReference type="FunCoup" id="Q6KZI7">
    <property type="interactions" value="180"/>
</dbReference>
<dbReference type="STRING" id="263820.PTO1280"/>
<dbReference type="PaxDb" id="263820-PTO1280"/>
<dbReference type="KEGG" id="pto:PTO1280"/>
<dbReference type="PATRIC" id="fig|263820.9.peg.1329"/>
<dbReference type="eggNOG" id="arCOG01751">
    <property type="taxonomic scope" value="Archaea"/>
</dbReference>
<dbReference type="HOGENOM" id="CLU_084513_4_0_2"/>
<dbReference type="InParanoid" id="Q6KZI7"/>
<dbReference type="OrthoDB" id="25810at2157"/>
<dbReference type="Proteomes" id="UP000000438">
    <property type="component" value="Chromosome"/>
</dbReference>
<dbReference type="GO" id="GO:0005737">
    <property type="term" value="C:cytoplasm"/>
    <property type="evidence" value="ECO:0007669"/>
    <property type="project" value="UniProtKB-SubCell"/>
</dbReference>
<dbReference type="GO" id="GO:1990904">
    <property type="term" value="C:ribonucleoprotein complex"/>
    <property type="evidence" value="ECO:0007669"/>
    <property type="project" value="UniProtKB-KW"/>
</dbReference>
<dbReference type="GO" id="GO:0005840">
    <property type="term" value="C:ribosome"/>
    <property type="evidence" value="ECO:0007669"/>
    <property type="project" value="UniProtKB-KW"/>
</dbReference>
<dbReference type="GO" id="GO:0004526">
    <property type="term" value="F:ribonuclease P activity"/>
    <property type="evidence" value="ECO:0007669"/>
    <property type="project" value="UniProtKB-UniRule"/>
</dbReference>
<dbReference type="GO" id="GO:0019843">
    <property type="term" value="F:rRNA binding"/>
    <property type="evidence" value="ECO:0007669"/>
    <property type="project" value="UniProtKB-KW"/>
</dbReference>
<dbReference type="GO" id="GO:0003735">
    <property type="term" value="F:structural constituent of ribosome"/>
    <property type="evidence" value="ECO:0007669"/>
    <property type="project" value="InterPro"/>
</dbReference>
<dbReference type="GO" id="GO:0042254">
    <property type="term" value="P:ribosome biogenesis"/>
    <property type="evidence" value="ECO:0007669"/>
    <property type="project" value="InterPro"/>
</dbReference>
<dbReference type="GO" id="GO:0006412">
    <property type="term" value="P:translation"/>
    <property type="evidence" value="ECO:0007669"/>
    <property type="project" value="UniProtKB-UniRule"/>
</dbReference>
<dbReference type="GO" id="GO:0001682">
    <property type="term" value="P:tRNA 5'-leader removal"/>
    <property type="evidence" value="ECO:0007669"/>
    <property type="project" value="UniProtKB-UniRule"/>
</dbReference>
<dbReference type="Gene3D" id="3.30.1330.30">
    <property type="match status" value="1"/>
</dbReference>
<dbReference type="HAMAP" id="MF_00326">
    <property type="entry name" value="Ribosomal_eL8"/>
    <property type="match status" value="1"/>
</dbReference>
<dbReference type="InterPro" id="IPR050257">
    <property type="entry name" value="eL8/uL1-like"/>
</dbReference>
<dbReference type="InterPro" id="IPR029064">
    <property type="entry name" value="Ribosomal_eL30-like_sf"/>
</dbReference>
<dbReference type="InterPro" id="IPR004037">
    <property type="entry name" value="Ribosomal_eL8-like_CS"/>
</dbReference>
<dbReference type="InterPro" id="IPR004038">
    <property type="entry name" value="Ribosomal_eL8/eL30/eS12/Gad45"/>
</dbReference>
<dbReference type="InterPro" id="IPR018492">
    <property type="entry name" value="Ribosomal_eL8/Nhp2"/>
</dbReference>
<dbReference type="InterPro" id="IPR022481">
    <property type="entry name" value="Ribosomal_eL8_arc"/>
</dbReference>
<dbReference type="NCBIfam" id="TIGR03677">
    <property type="entry name" value="eL8_ribo"/>
    <property type="match status" value="1"/>
</dbReference>
<dbReference type="PANTHER" id="PTHR23105">
    <property type="entry name" value="RIBOSOMAL PROTEIN L7AE FAMILY MEMBER"/>
    <property type="match status" value="1"/>
</dbReference>
<dbReference type="Pfam" id="PF01248">
    <property type="entry name" value="Ribosomal_L7Ae"/>
    <property type="match status" value="1"/>
</dbReference>
<dbReference type="PRINTS" id="PR00881">
    <property type="entry name" value="L7ARS6FAMILY"/>
</dbReference>
<dbReference type="PRINTS" id="PR00884">
    <property type="entry name" value="RIBOSOMALHS6"/>
</dbReference>
<dbReference type="SUPFAM" id="SSF55315">
    <property type="entry name" value="L30e-like"/>
    <property type="match status" value="1"/>
</dbReference>
<dbReference type="PROSITE" id="PS01082">
    <property type="entry name" value="RIBOSOMAL_L7AE"/>
    <property type="match status" value="1"/>
</dbReference>
<gene>
    <name evidence="1" type="primary">rpl7ae</name>
    <name type="ordered locus">PTO1280</name>
</gene>
<proteinExistence type="inferred from homology"/>
<feature type="chain" id="PRO_0000136799" description="Large ribosomal subunit protein eL8">
    <location>
        <begin position="1"/>
        <end position="127"/>
    </location>
</feature>
<organism>
    <name type="scientific">Picrophilus torridus (strain ATCC 700027 / DSM 9790 / JCM 10055 / NBRC 100828 / KAW 2/3)</name>
    <dbReference type="NCBI Taxonomy" id="1122961"/>
    <lineage>
        <taxon>Archaea</taxon>
        <taxon>Methanobacteriati</taxon>
        <taxon>Thermoplasmatota</taxon>
        <taxon>Thermoplasmata</taxon>
        <taxon>Thermoplasmatales</taxon>
        <taxon>Picrophilaceae</taxon>
        <taxon>Picrophilus</taxon>
    </lineage>
</organism>
<comment type="function">
    <text evidence="1">Multifunctional RNA-binding protein that recognizes the K-turn motif in ribosomal RNA, the RNA component of RNase P, box H/ACA, box C/D and box C'/D' sRNAs.</text>
</comment>
<comment type="subunit">
    <text evidence="1">Part of the 50S ribosomal subunit. Probably part of the RNase P complex.</text>
</comment>
<comment type="subcellular location">
    <subcellularLocation>
        <location evidence="1">Cytoplasm</location>
    </subcellularLocation>
</comment>
<comment type="similarity">
    <text evidence="1">Belongs to the eukaryotic ribosomal protein eL8 family.</text>
</comment>
<sequence>MESYVKFQTPETLEKAVLDMVENSYKTGKVRKGTNEVVKSIERGESKLVVIAEDVSPAEVVYYLPTLCEERKVPYVYVKKKSDLGLKVGIASAASVSIVDYGKNDDAYKSIVSQINDAKSGKSENKE</sequence>
<accession>Q6KZI7</accession>
<keyword id="KW-0963">Cytoplasm</keyword>
<keyword id="KW-0687">Ribonucleoprotein</keyword>
<keyword id="KW-0689">Ribosomal protein</keyword>
<keyword id="KW-0694">RNA-binding</keyword>
<keyword id="KW-0699">rRNA-binding</keyword>
<keyword id="KW-0819">tRNA processing</keyword>
<reference key="1">
    <citation type="journal article" date="2004" name="Proc. Natl. Acad. Sci. U.S.A.">
        <title>Genome sequence of Picrophilus torridus and its implications for life around pH 0.</title>
        <authorList>
            <person name="Fuetterer O."/>
            <person name="Angelov A."/>
            <person name="Liesegang H."/>
            <person name="Gottschalk G."/>
            <person name="Schleper C."/>
            <person name="Schepers B."/>
            <person name="Dock C."/>
            <person name="Antranikian G."/>
            <person name="Liebl W."/>
        </authorList>
    </citation>
    <scope>NUCLEOTIDE SEQUENCE [LARGE SCALE GENOMIC DNA]</scope>
    <source>
        <strain>ATCC 700027 / DSM 9790 / JCM 10055 / NBRC 100828 / KAW 2/3</strain>
    </source>
</reference>
<name>RL7A_PICTO</name>
<evidence type="ECO:0000255" key="1">
    <source>
        <dbReference type="HAMAP-Rule" id="MF_00326"/>
    </source>
</evidence>
<evidence type="ECO:0000305" key="2"/>